<reference key="1">
    <citation type="journal article" date="1989" name="Nucleic Acids Res.">
        <title>Nucleotide sequence of two toxin genes from Bacillus sphaericus IAB59: sequence comparisons between five highly toxinogenic strains.</title>
        <authorList>
            <person name="Berry C."/>
            <person name="Jackson-Yap J."/>
            <person name="Oei C."/>
            <person name="Hindley J."/>
        </authorList>
    </citation>
    <scope>NUCLEOTIDE SEQUENCE [GENOMIC DNA]</scope>
    <source>
        <strain>IAB59</strain>
    </source>
</reference>
<reference key="2">
    <citation type="submission" date="1997-08" db="EMBL/GenBank/DDBJ databases">
        <authorList>
            <person name="Humphreys M.J."/>
            <person name="Berry C."/>
        </authorList>
    </citation>
    <scope>NUCLEOTIDE SEQUENCE [GENOMIC DNA]</scope>
    <source>
        <strain>9002</strain>
        <strain>IAB872</strain>
        <strain>IAB881</strain>
        <strain>PR1</strain>
    </source>
</reference>
<reference key="3">
    <citation type="journal article" date="1993" name="J. Bacteriol.">
        <title>Genetic determinants of host ranges of Bacillus sphaericus mosquito larvicidal toxins.</title>
        <authorList>
            <person name="Berry C."/>
            <person name="Hindley J."/>
            <person name="Ehrhardt A.F."/>
            <person name="Grounds T."/>
            <person name="de Souza I."/>
            <person name="Davidson E.W."/>
        </authorList>
    </citation>
    <scope>HOST RANGE</scope>
    <source>
        <strain>IAB59</strain>
    </source>
</reference>
<name>BINB3_LYSSH</name>
<accession>P12964</accession>
<organism>
    <name type="scientific">Lysinibacillus sphaericus</name>
    <name type="common">Bacillus sphaericus</name>
    <dbReference type="NCBI Taxonomy" id="1421"/>
    <lineage>
        <taxon>Bacteria</taxon>
        <taxon>Bacillati</taxon>
        <taxon>Bacillota</taxon>
        <taxon>Bacilli</taxon>
        <taxon>Bacillales</taxon>
        <taxon>Bacillaceae</taxon>
        <taxon>Lysinibacillus</taxon>
    </lineage>
</organism>
<feature type="chain" id="PRO_0000174116" description="Binary larvicide subunit BinB">
    <location>
        <begin position="1"/>
        <end position="448"/>
    </location>
</feature>
<feature type="region of interest" description="Beta-trefoil domain" evidence="1">
    <location>
        <begin position="1"/>
        <end position="198"/>
    </location>
</feature>
<feature type="region of interest" description="Probable pore-forming domain" evidence="1">
    <location>
        <begin position="199"/>
        <end position="448"/>
    </location>
</feature>
<feature type="disulfide bond" evidence="1">
    <location>
        <begin position="67"/>
        <end position="161"/>
    </location>
</feature>
<dbReference type="EMBL" id="X14964">
    <property type="protein sequence ID" value="CAA33086.1"/>
    <property type="molecule type" value="Genomic_DNA"/>
</dbReference>
<dbReference type="EMBL" id="Y13311">
    <property type="protein sequence ID" value="CAA73752.1"/>
    <property type="molecule type" value="Genomic_DNA"/>
</dbReference>
<dbReference type="EMBL" id="Y13312">
    <property type="protein sequence ID" value="CAA73753.1"/>
    <property type="molecule type" value="Genomic_DNA"/>
</dbReference>
<dbReference type="EMBL" id="Y13313">
    <property type="protein sequence ID" value="CAA73754.1"/>
    <property type="molecule type" value="Genomic_DNA"/>
</dbReference>
<dbReference type="EMBL" id="Y13314">
    <property type="protein sequence ID" value="CAA73755.1"/>
    <property type="molecule type" value="Genomic_DNA"/>
</dbReference>
<dbReference type="PIR" id="S07711">
    <property type="entry name" value="S07711"/>
</dbReference>
<dbReference type="RefSeq" id="WP_197223365.1">
    <property type="nucleotide sequence ID" value="NZ_CP071741.1"/>
</dbReference>
<dbReference type="SMR" id="P12964"/>
<dbReference type="GO" id="GO:0090729">
    <property type="term" value="F:toxin activity"/>
    <property type="evidence" value="ECO:0007669"/>
    <property type="project" value="UniProtKB-KW"/>
</dbReference>
<dbReference type="GO" id="GO:0030435">
    <property type="term" value="P:sporulation resulting in formation of a cellular spore"/>
    <property type="evidence" value="ECO:0007669"/>
    <property type="project" value="UniProtKB-KW"/>
</dbReference>
<dbReference type="CDD" id="cd23429">
    <property type="entry name" value="beta-trefoil_Ricin_BinAB"/>
    <property type="match status" value="1"/>
</dbReference>
<dbReference type="Gene3D" id="2.80.10.50">
    <property type="match status" value="1"/>
</dbReference>
<proteinExistence type="inferred from homology"/>
<comment type="function">
    <text evidence="2 3">Component of a binary toxin active against Culex and some Aedes mosquito larvae; mortality towards both C.quinquefasciatus and A.atropalpus is maximal by 48 hours. A.aegypti is not very susceptible to this toxin (PubMed:8419297). This subunit is responsible for localized binding to specific regions of the host larval gut. Binary toxin internalization into host gut cells requires both proteins (By similarity).</text>
</comment>
<comment type="subunit">
    <text evidence="1">Forms a heterodimer with BinA.</text>
</comment>
<comment type="subcellular location">
    <subcellularLocation>
        <location evidence="2">Spore</location>
        <location evidence="2">Perispore</location>
    </subcellularLocation>
</comment>
<comment type="developmental stage">
    <text evidence="2">Accumulates next to spores within the exosporeum.</text>
</comment>
<comment type="domain">
    <text evidence="1">Has an N-terminal beta-trefoil domain and a C-terminal pore-forming domain. The trefoil domain has barrel and cap subdomains; the cap has 3 possible carbohydrate-binding modules while the barrel is involved in host cell receptor binding. At neutral pH the carbohydrate-binding modules are accessible on the toxin surface but the barrel subdomain is not.</text>
</comment>
<comment type="PTM">
    <text evidence="1">Processed by proteases extracted from mosquito larval gut.</text>
</comment>
<comment type="similarity">
    <text evidence="5">Belongs to the toxin_10 family.</text>
</comment>
<sequence>MCDSKDNSGVSEKCGKKFTNYPLNTTPTSLNYNLPEISKKFYNLKNKYSRNGYGLSKTEFPSSIENCPAKEYSIMYDNKDPRFLIRFLLDDGRYIIADRDDGEVFDEAPIYLDNNNHPIISRHYTGEERQKFEQVGSGDYITGEQFFQFYTQNKTRVLSNCRALDSRTILLSTAKIFPIYPPASETQLTAFVNSSFYAAAIPQLPQTSLLENIPEPTSLDDSGVLPKDAVRAVKGSALLPCIIVHDPNLNNSDKMKFNTYYLLEYKEYWHQLWSQIIPAHQTVKIQERTGISEVVQNSMIEDLNMYIGADFGMHFYLRSSGFKEQITRGLNRPLSQTTTQLGERVEEMEYYNSNDLDVRYVKYALAREFTLKRVNGEIVKNWVAVDYRLAGIQSYPNAPITNPLTLTKHTIIRCENSYDGHIFKTPLIFKNGEVIVKTNEELIPKINQ</sequence>
<gene>
    <name type="primary">binB</name>
    <name type="synonym">sph04</name>
</gene>
<evidence type="ECO:0000250" key="1">
    <source>
        <dbReference type="UniProtKB" id="P10565"/>
    </source>
</evidence>
<evidence type="ECO:0000250" key="2">
    <source>
        <dbReference type="UniProtKB" id="P18568"/>
    </source>
</evidence>
<evidence type="ECO:0000269" key="3">
    <source>
    </source>
</evidence>
<evidence type="ECO:0000303" key="4">
    <source>
    </source>
</evidence>
<evidence type="ECO:0000305" key="5"/>
<keyword id="KW-1015">Disulfide bond</keyword>
<keyword id="KW-0749">Sporulation</keyword>
<keyword id="KW-0800">Toxin</keyword>
<keyword id="KW-0843">Virulence</keyword>
<protein>
    <recommendedName>
        <fullName evidence="5">Binary larvicide subunit BinB</fullName>
    </recommendedName>
    <alternativeName>
        <fullName evidence="4">51.4 kDa insecticidal toxin</fullName>
    </alternativeName>
</protein>